<protein>
    <recommendedName>
        <fullName evidence="1">HMP-PP phosphatase</fullName>
        <ecNumber evidence="1">3.6.1.-</ecNumber>
    </recommendedName>
</protein>
<organism>
    <name type="scientific">Escherichia coli (strain K12)</name>
    <dbReference type="NCBI Taxonomy" id="83333"/>
    <lineage>
        <taxon>Bacteria</taxon>
        <taxon>Pseudomonadati</taxon>
        <taxon>Pseudomonadota</taxon>
        <taxon>Gammaproteobacteria</taxon>
        <taxon>Enterobacterales</taxon>
        <taxon>Enterobacteriaceae</taxon>
        <taxon>Escherichia</taxon>
    </lineage>
</organism>
<gene>
    <name evidence="1" type="primary">cof</name>
    <name type="ordered locus">b0446</name>
    <name type="ordered locus">JW0436</name>
</gene>
<evidence type="ECO:0000255" key="1">
    <source>
        <dbReference type="HAMAP-Rule" id="MF_01847"/>
    </source>
</evidence>
<evidence type="ECO:0000269" key="2">
    <source>
    </source>
</evidence>
<evidence type="ECO:0000269" key="3">
    <source>
    </source>
</evidence>
<evidence type="ECO:0000305" key="4"/>
<sequence>MARLAAFDMDGTLLMPDHHLGEKTLSTLARLRERDITLTFATGRHALEMQHILGALSLDAYLITGNGTRVHSLEGELLHRDDLPADVAELVLYQQWDTRASMHIFNDDGWFTGKEIPALLQAFVYSGFRYQIIDVKKMPLGSVTKICFCGDHDDLTRLQIQLYEALGERAHLCFSATDCLEVLPVGCNKGAALTVLTQHLGLSLRDCMAFGDAMNDREMLVSVGSGFIMGNAMPQLRAELPHLPVIGHCRNQAVSHYLTHWLDYPHLPYSPE</sequence>
<comment type="function">
    <text evidence="1 2 3">Catalyzes the hydrolysis of 4-amino-2-methyl-5-hydroxymethylpyrimidine pyrophosphate (HMP-PP) to 4-amino-2-methyl-5-hydroxymethylpyrimidine phosphate (HMP-P). Can also hydrolyze other substrates such as MeO-HMP-PP and 4-amino-2-trifluoromethyl 5-hydroxymethylpyrimidine pyrophosphate (CF3-HMP-PP) to give MeO-HMP-P and 4-amino-2-trifluoromethyl-5-hydroxymethylpyrimidine phosphate. This hydrolysis generates resistance to the antibiotics (bacimethrin, CF3-HMP) by reducing the formation of their toxic forms, 2'-methoxythiamin pyrophosphate (MeO-TPP) and CF3-HMP-PP. Also hydrolyzes pyridoxal-phosphate (PLP) and flavin mononucleotide (FMN), and purines (GMP and IMP) as secondary substrates.</text>
</comment>
<comment type="catalytic activity">
    <reaction evidence="2">
        <text>4-amino-2-methyl-5-(diphosphooxymethyl)pyrimidine + H2O = 4-amino-2-methyl-5-(phosphooxymethyl)pyrimidine + phosphate + H(+)</text>
        <dbReference type="Rhea" id="RHEA:27914"/>
        <dbReference type="ChEBI" id="CHEBI:15377"/>
        <dbReference type="ChEBI" id="CHEBI:15378"/>
        <dbReference type="ChEBI" id="CHEBI:43474"/>
        <dbReference type="ChEBI" id="CHEBI:57841"/>
        <dbReference type="ChEBI" id="CHEBI:58354"/>
    </reaction>
</comment>
<comment type="cofactor">
    <cofactor evidence="1 3">
        <name>Mg(2+)</name>
        <dbReference type="ChEBI" id="CHEBI:18420"/>
    </cofactor>
    <cofactor evidence="1 3">
        <name>Mn(2+)</name>
        <dbReference type="ChEBI" id="CHEBI:29035"/>
    </cofactor>
    <cofactor evidence="1 3">
        <name>Co(2+)</name>
        <dbReference type="ChEBI" id="CHEBI:48828"/>
    </cofactor>
    <cofactor evidence="1 3">
        <name>Zn(2+)</name>
        <dbReference type="ChEBI" id="CHEBI:29105"/>
    </cofactor>
    <text evidence="1 3">Magnesium. Can also use other divalent metal cations as manganese, cobalt or zinc.</text>
</comment>
<comment type="biophysicochemical properties">
    <kinetics>
        <KM evidence="3">0.68 mM for PLP (with magnesium ions as cofactor and at pH 9)</KM>
        <KM evidence="3">2.5 mM for 2-deoxyglucose-6-P (with magnesium ions as cofactor and at pH 9)</KM>
    </kinetics>
    <phDependence>
        <text evidence="3">Optimum pH is between 6 and 7.5.</text>
    </phDependence>
</comment>
<comment type="similarity">
    <text evidence="1">Belongs to the HAD-like hydrolase superfamily. Cof family.</text>
</comment>
<comment type="sequence caution" evidence="4">
    <conflict type="erroneous initiation">
        <sequence resource="EMBL-CDS" id="AAB40202"/>
    </conflict>
    <text>Extended N-terminus.</text>
</comment>
<comment type="sequence caution" evidence="4">
    <conflict type="erroneous initiation">
        <sequence resource="EMBL-CDS" id="CAA91181"/>
    </conflict>
    <text>Extended N-terminus.</text>
</comment>
<accession>P46891</accession>
<accession>P71208</accession>
<accession>P77198</accession>
<accession>Q2MBY0</accession>
<keyword id="KW-0378">Hydrolase</keyword>
<keyword id="KW-0460">Magnesium</keyword>
<keyword id="KW-0479">Metal-binding</keyword>
<keyword id="KW-1185">Reference proteome</keyword>
<feature type="chain" id="PRO_0000054418" description="HMP-PP phosphatase">
    <location>
        <begin position="1"/>
        <end position="272"/>
    </location>
</feature>
<feature type="active site" description="Nucleophile" evidence="1">
    <location>
        <position position="8"/>
    </location>
</feature>
<feature type="binding site" evidence="1">
    <location>
        <position position="8"/>
    </location>
    <ligand>
        <name>Mg(2+)</name>
        <dbReference type="ChEBI" id="CHEBI:18420"/>
    </ligand>
</feature>
<feature type="binding site" evidence="1">
    <location>
        <position position="10"/>
    </location>
    <ligand>
        <name>Mg(2+)</name>
        <dbReference type="ChEBI" id="CHEBI:18420"/>
    </ligand>
</feature>
<feature type="binding site" evidence="1">
    <location>
        <position position="212"/>
    </location>
    <ligand>
        <name>Mg(2+)</name>
        <dbReference type="ChEBI" id="CHEBI:18420"/>
    </ligand>
</feature>
<feature type="sequence conflict" description="In Ref. 2; BAA11650." evidence="4" ref="2">
    <original>C</original>
    <variation>S</variation>
    <location>
        <position position="173"/>
    </location>
</feature>
<reference key="1">
    <citation type="submission" date="1995-10" db="EMBL/GenBank/DDBJ databases">
        <authorList>
            <person name="Patzer S.I."/>
            <person name="Hantke K."/>
        </authorList>
    </citation>
    <scope>NUCLEOTIDE SEQUENCE [GENOMIC DNA]</scope>
    <source>
        <strain>K12 / MC4100 / ATCC 35695 / DSM 6574</strain>
    </source>
</reference>
<reference key="2">
    <citation type="submission" date="1996-10" db="EMBL/GenBank/DDBJ databases">
        <title>Nucleotide sequence analysis of the E. coli chromosome around the 10.0 min region.</title>
        <authorList>
            <person name="Hatada E."/>
            <person name="Ohmori H."/>
            <person name="Qiao Y."/>
            <person name="Tsuji M."/>
            <person name="Fukuda R."/>
        </authorList>
    </citation>
    <scope>NUCLEOTIDE SEQUENCE [GENOMIC DNA]</scope>
    <source>
        <strain>K12 / W3110 / ATCC 27325 / DSM 5911</strain>
    </source>
</reference>
<reference key="3">
    <citation type="submission" date="1997-01" db="EMBL/GenBank/DDBJ databases">
        <title>Sequence of minutes 4-25 of Escherichia coli.</title>
        <authorList>
            <person name="Chung E."/>
            <person name="Allen E."/>
            <person name="Araujo R."/>
            <person name="Aparicio A.M."/>
            <person name="Davis K."/>
            <person name="Duncan M."/>
            <person name="Federspiel N."/>
            <person name="Hyman R."/>
            <person name="Kalman S."/>
            <person name="Komp C."/>
            <person name="Kurdi O."/>
            <person name="Lew H."/>
            <person name="Lin D."/>
            <person name="Namath A."/>
            <person name="Oefner P."/>
            <person name="Roberts D."/>
            <person name="Schramm S."/>
            <person name="Davis R.W."/>
        </authorList>
    </citation>
    <scope>NUCLEOTIDE SEQUENCE [LARGE SCALE GENOMIC DNA]</scope>
    <source>
        <strain>K12 / MG1655 / ATCC 47076</strain>
    </source>
</reference>
<reference key="4">
    <citation type="journal article" date="1997" name="Science">
        <title>The complete genome sequence of Escherichia coli K-12.</title>
        <authorList>
            <person name="Blattner F.R."/>
            <person name="Plunkett G. III"/>
            <person name="Bloch C.A."/>
            <person name="Perna N.T."/>
            <person name="Burland V."/>
            <person name="Riley M."/>
            <person name="Collado-Vides J."/>
            <person name="Glasner J.D."/>
            <person name="Rode C.K."/>
            <person name="Mayhew G.F."/>
            <person name="Gregor J."/>
            <person name="Davis N.W."/>
            <person name="Kirkpatrick H.A."/>
            <person name="Goeden M.A."/>
            <person name="Rose D.J."/>
            <person name="Mau B."/>
            <person name="Shao Y."/>
        </authorList>
    </citation>
    <scope>NUCLEOTIDE SEQUENCE [LARGE SCALE GENOMIC DNA]</scope>
    <source>
        <strain>K12 / MG1655 / ATCC 47076</strain>
    </source>
</reference>
<reference key="5">
    <citation type="journal article" date="2006" name="Mol. Syst. Biol.">
        <title>Highly accurate genome sequences of Escherichia coli K-12 strains MG1655 and W3110.</title>
        <authorList>
            <person name="Hayashi K."/>
            <person name="Morooka N."/>
            <person name="Yamamoto Y."/>
            <person name="Fujita K."/>
            <person name="Isono K."/>
            <person name="Choi S."/>
            <person name="Ohtsubo E."/>
            <person name="Baba T."/>
            <person name="Wanner B.L."/>
            <person name="Mori H."/>
            <person name="Horiuchi T."/>
        </authorList>
    </citation>
    <scope>NUCLEOTIDE SEQUENCE [LARGE SCALE GENOMIC DNA]</scope>
    <source>
        <strain>K12 / W3110 / ATCC 27325 / DSM 5911</strain>
    </source>
</reference>
<reference key="6">
    <citation type="journal article" date="2004" name="J. Biol. Chem.">
        <title>A genetic screen for the identification of thiamin metabolic genes.</title>
        <authorList>
            <person name="Lawhorn B.G."/>
            <person name="Gerdes S.Y."/>
            <person name="Begley T.P."/>
        </authorList>
    </citation>
    <scope>FUNCTION AS A HMP-PP PHOSPHATASE</scope>
    <scope>CATALYTIC ACTIVITY</scope>
    <scope>ROLE IN ANTIBIOTIC RESISTANCE</scope>
    <source>
        <strain>K12 / MG1655 / ATCC 47076</strain>
    </source>
</reference>
<reference key="7">
    <citation type="journal article" date="2006" name="J. Biol. Chem.">
        <title>Genome-wide analysis of substrate specificities of the Escherichia coli haloacid dehalogenase-like phosphatase family.</title>
        <authorList>
            <person name="Kuznetsova E."/>
            <person name="Proudfoot M."/>
            <person name="Gonzalez C.F."/>
            <person name="Brown G."/>
            <person name="Omelchenko M.V."/>
            <person name="Borozan I."/>
            <person name="Carmel L."/>
            <person name="Wolf Y.I."/>
            <person name="Mori H."/>
            <person name="Savchenko A.V."/>
            <person name="Arrowsmith C.H."/>
            <person name="Koonin E.V."/>
            <person name="Edwards A.M."/>
            <person name="Yakunin A.F."/>
        </authorList>
    </citation>
    <scope>FUNCTION AS A PHOSPHATASE</scope>
    <scope>BIOPHYSICOCHEMICAL PROPERTIES</scope>
    <scope>SUBSTRATE SPECIFICITY</scope>
    <scope>COFACTOR</scope>
</reference>
<name>COF_ECOLI</name>
<proteinExistence type="evidence at protein level"/>
<dbReference type="EC" id="3.6.1.-" evidence="1"/>
<dbReference type="EMBL" id="Z54355">
    <property type="protein sequence ID" value="CAA91181.1"/>
    <property type="status" value="ALT_INIT"/>
    <property type="molecule type" value="Genomic_DNA"/>
</dbReference>
<dbReference type="EMBL" id="D82943">
    <property type="protein sequence ID" value="BAA11650.1"/>
    <property type="molecule type" value="Genomic_DNA"/>
</dbReference>
<dbReference type="EMBL" id="U82664">
    <property type="protein sequence ID" value="AAB40202.1"/>
    <property type="status" value="ALT_INIT"/>
    <property type="molecule type" value="Genomic_DNA"/>
</dbReference>
<dbReference type="EMBL" id="U00096">
    <property type="protein sequence ID" value="AAC73549.2"/>
    <property type="molecule type" value="Genomic_DNA"/>
</dbReference>
<dbReference type="EMBL" id="AP009048">
    <property type="protein sequence ID" value="BAE76226.1"/>
    <property type="molecule type" value="Genomic_DNA"/>
</dbReference>
<dbReference type="PIR" id="F64774">
    <property type="entry name" value="F64774"/>
</dbReference>
<dbReference type="RefSeq" id="NP_414980.2">
    <property type="nucleotide sequence ID" value="NC_000913.3"/>
</dbReference>
<dbReference type="RefSeq" id="WP_001336137.1">
    <property type="nucleotide sequence ID" value="NZ_LN832404.1"/>
</dbReference>
<dbReference type="SMR" id="P46891"/>
<dbReference type="BioGRID" id="4260651">
    <property type="interactions" value="8"/>
</dbReference>
<dbReference type="FunCoup" id="P46891">
    <property type="interactions" value="1"/>
</dbReference>
<dbReference type="IntAct" id="P46891">
    <property type="interactions" value="1"/>
</dbReference>
<dbReference type="STRING" id="511145.b0446"/>
<dbReference type="PaxDb" id="511145-b0446"/>
<dbReference type="DNASU" id="945089"/>
<dbReference type="EnsemblBacteria" id="AAC73549">
    <property type="protein sequence ID" value="AAC73549"/>
    <property type="gene ID" value="b0446"/>
</dbReference>
<dbReference type="GeneID" id="945089"/>
<dbReference type="KEGG" id="ecj:JW0436"/>
<dbReference type="KEGG" id="eco:b0446"/>
<dbReference type="KEGG" id="ecoc:C3026_02185"/>
<dbReference type="PATRIC" id="fig|1411691.4.peg.1830"/>
<dbReference type="EchoBASE" id="EB3007"/>
<dbReference type="eggNOG" id="COG0561">
    <property type="taxonomic scope" value="Bacteria"/>
</dbReference>
<dbReference type="HOGENOM" id="CLU_044146_5_2_6"/>
<dbReference type="InParanoid" id="P46891"/>
<dbReference type="OMA" id="CFSAMDC"/>
<dbReference type="OrthoDB" id="5498330at2"/>
<dbReference type="PhylomeDB" id="P46891"/>
<dbReference type="BioCyc" id="EcoCyc:G6246-MONOMER"/>
<dbReference type="BioCyc" id="MetaCyc:G6246-MONOMER"/>
<dbReference type="PRO" id="PR:P46891"/>
<dbReference type="Proteomes" id="UP000000625">
    <property type="component" value="Chromosome"/>
</dbReference>
<dbReference type="GO" id="GO:0002145">
    <property type="term" value="F:4-amino-5-hydroxymethyl-2-methylpyrimidine diphosphatase activity"/>
    <property type="evidence" value="ECO:0007669"/>
    <property type="project" value="RHEA"/>
</dbReference>
<dbReference type="GO" id="GO:0000287">
    <property type="term" value="F:magnesium ion binding"/>
    <property type="evidence" value="ECO:0000314"/>
    <property type="project" value="UniProtKB"/>
</dbReference>
<dbReference type="GO" id="GO:0017110">
    <property type="term" value="F:nucleoside diphosphate phosphatase activity"/>
    <property type="evidence" value="ECO:0000314"/>
    <property type="project" value="EcoliWiki"/>
</dbReference>
<dbReference type="GO" id="GO:0016791">
    <property type="term" value="F:phosphatase activity"/>
    <property type="evidence" value="ECO:0000314"/>
    <property type="project" value="UniProtKB"/>
</dbReference>
<dbReference type="GO" id="GO:0017001">
    <property type="term" value="P:antibiotic catabolic process"/>
    <property type="evidence" value="ECO:0000314"/>
    <property type="project" value="UniProtKB"/>
</dbReference>
<dbReference type="GO" id="GO:0009228">
    <property type="term" value="P:thiamine biosynthetic process"/>
    <property type="evidence" value="ECO:0000315"/>
    <property type="project" value="EcoliWiki"/>
</dbReference>
<dbReference type="CDD" id="cd07516">
    <property type="entry name" value="HAD_Pase"/>
    <property type="match status" value="1"/>
</dbReference>
<dbReference type="FunFam" id="3.30.1240.10:FF:000002">
    <property type="entry name" value="HMP-PP phosphatase"/>
    <property type="match status" value="1"/>
</dbReference>
<dbReference type="Gene3D" id="3.30.1240.10">
    <property type="match status" value="1"/>
</dbReference>
<dbReference type="Gene3D" id="3.40.50.1000">
    <property type="entry name" value="HAD superfamily/HAD-like"/>
    <property type="match status" value="1"/>
</dbReference>
<dbReference type="HAMAP" id="MF_01847">
    <property type="entry name" value="HMP_PP_phosphat"/>
    <property type="match status" value="1"/>
</dbReference>
<dbReference type="InterPro" id="IPR000150">
    <property type="entry name" value="Cof"/>
</dbReference>
<dbReference type="InterPro" id="IPR036412">
    <property type="entry name" value="HAD-like_sf"/>
</dbReference>
<dbReference type="InterPro" id="IPR006379">
    <property type="entry name" value="HAD-SF_hydro_IIB"/>
</dbReference>
<dbReference type="InterPro" id="IPR023214">
    <property type="entry name" value="HAD_sf"/>
</dbReference>
<dbReference type="InterPro" id="IPR023938">
    <property type="entry name" value="HMP-PP_phosphatase"/>
</dbReference>
<dbReference type="NCBIfam" id="TIGR00099">
    <property type="entry name" value="Cof-subfamily"/>
    <property type="match status" value="1"/>
</dbReference>
<dbReference type="NCBIfam" id="TIGR01484">
    <property type="entry name" value="HAD-SF-IIB"/>
    <property type="match status" value="1"/>
</dbReference>
<dbReference type="NCBIfam" id="NF011705">
    <property type="entry name" value="PRK15126.1"/>
    <property type="match status" value="1"/>
</dbReference>
<dbReference type="PANTHER" id="PTHR47267">
    <property type="match status" value="1"/>
</dbReference>
<dbReference type="PANTHER" id="PTHR47267:SF2">
    <property type="entry name" value="HMP-PP PHOSPHATASE"/>
    <property type="match status" value="1"/>
</dbReference>
<dbReference type="Pfam" id="PF08282">
    <property type="entry name" value="Hydrolase_3"/>
    <property type="match status" value="1"/>
</dbReference>
<dbReference type="SFLD" id="SFLDG01140">
    <property type="entry name" value="C2.B:_Phosphomannomutase_and_P"/>
    <property type="match status" value="1"/>
</dbReference>
<dbReference type="SFLD" id="SFLDS00003">
    <property type="entry name" value="Haloacid_Dehalogenase"/>
    <property type="match status" value="1"/>
</dbReference>
<dbReference type="SUPFAM" id="SSF56784">
    <property type="entry name" value="HAD-like"/>
    <property type="match status" value="1"/>
</dbReference>
<dbReference type="PROSITE" id="PS01228">
    <property type="entry name" value="COF_1"/>
    <property type="match status" value="1"/>
</dbReference>
<dbReference type="PROSITE" id="PS01229">
    <property type="entry name" value="COF_2"/>
    <property type="match status" value="1"/>
</dbReference>